<organism>
    <name type="scientific">Nocardia farcinica (strain IFM 10152)</name>
    <dbReference type="NCBI Taxonomy" id="247156"/>
    <lineage>
        <taxon>Bacteria</taxon>
        <taxon>Bacillati</taxon>
        <taxon>Actinomycetota</taxon>
        <taxon>Actinomycetes</taxon>
        <taxon>Mycobacteriales</taxon>
        <taxon>Nocardiaceae</taxon>
        <taxon>Nocardia</taxon>
    </lineage>
</organism>
<feature type="chain" id="PRO_0000182124" description="UDP-N-acetylmuramate--L-alanine ligase">
    <location>
        <begin position="1"/>
        <end position="501"/>
    </location>
</feature>
<feature type="binding site" evidence="1">
    <location>
        <begin position="130"/>
        <end position="136"/>
    </location>
    <ligand>
        <name>ATP</name>
        <dbReference type="ChEBI" id="CHEBI:30616"/>
    </ligand>
</feature>
<proteinExistence type="inferred from homology"/>
<dbReference type="EC" id="6.3.2.8" evidence="1"/>
<dbReference type="EMBL" id="AP006618">
    <property type="protein sequence ID" value="BAD56613.1"/>
    <property type="molecule type" value="Genomic_DNA"/>
</dbReference>
<dbReference type="RefSeq" id="WP_011208298.1">
    <property type="nucleotide sequence ID" value="NC_006361.1"/>
</dbReference>
<dbReference type="SMR" id="Q5YYX8"/>
<dbReference type="STRING" id="247156.NFA_17670"/>
<dbReference type="GeneID" id="61132548"/>
<dbReference type="KEGG" id="nfa:NFA_17670"/>
<dbReference type="eggNOG" id="COG0773">
    <property type="taxonomic scope" value="Bacteria"/>
</dbReference>
<dbReference type="HOGENOM" id="CLU_028104_2_2_11"/>
<dbReference type="OrthoDB" id="9804126at2"/>
<dbReference type="UniPathway" id="UPA00219"/>
<dbReference type="Proteomes" id="UP000006820">
    <property type="component" value="Chromosome"/>
</dbReference>
<dbReference type="GO" id="GO:0005737">
    <property type="term" value="C:cytoplasm"/>
    <property type="evidence" value="ECO:0007669"/>
    <property type="project" value="UniProtKB-SubCell"/>
</dbReference>
<dbReference type="GO" id="GO:0005524">
    <property type="term" value="F:ATP binding"/>
    <property type="evidence" value="ECO:0007669"/>
    <property type="project" value="UniProtKB-UniRule"/>
</dbReference>
<dbReference type="GO" id="GO:0008763">
    <property type="term" value="F:UDP-N-acetylmuramate-L-alanine ligase activity"/>
    <property type="evidence" value="ECO:0007669"/>
    <property type="project" value="UniProtKB-UniRule"/>
</dbReference>
<dbReference type="GO" id="GO:0051301">
    <property type="term" value="P:cell division"/>
    <property type="evidence" value="ECO:0007669"/>
    <property type="project" value="UniProtKB-KW"/>
</dbReference>
<dbReference type="GO" id="GO:0071555">
    <property type="term" value="P:cell wall organization"/>
    <property type="evidence" value="ECO:0007669"/>
    <property type="project" value="UniProtKB-KW"/>
</dbReference>
<dbReference type="GO" id="GO:0009252">
    <property type="term" value="P:peptidoglycan biosynthetic process"/>
    <property type="evidence" value="ECO:0007669"/>
    <property type="project" value="UniProtKB-UniRule"/>
</dbReference>
<dbReference type="GO" id="GO:0008360">
    <property type="term" value="P:regulation of cell shape"/>
    <property type="evidence" value="ECO:0007669"/>
    <property type="project" value="UniProtKB-KW"/>
</dbReference>
<dbReference type="Gene3D" id="3.90.190.20">
    <property type="entry name" value="Mur ligase, C-terminal domain"/>
    <property type="match status" value="1"/>
</dbReference>
<dbReference type="Gene3D" id="3.40.1190.10">
    <property type="entry name" value="Mur-like, catalytic domain"/>
    <property type="match status" value="1"/>
</dbReference>
<dbReference type="Gene3D" id="3.40.50.720">
    <property type="entry name" value="NAD(P)-binding Rossmann-like Domain"/>
    <property type="match status" value="1"/>
</dbReference>
<dbReference type="HAMAP" id="MF_00046">
    <property type="entry name" value="MurC"/>
    <property type="match status" value="1"/>
</dbReference>
<dbReference type="InterPro" id="IPR036565">
    <property type="entry name" value="Mur-like_cat_sf"/>
</dbReference>
<dbReference type="InterPro" id="IPR004101">
    <property type="entry name" value="Mur_ligase_C"/>
</dbReference>
<dbReference type="InterPro" id="IPR036615">
    <property type="entry name" value="Mur_ligase_C_dom_sf"/>
</dbReference>
<dbReference type="InterPro" id="IPR013221">
    <property type="entry name" value="Mur_ligase_cen"/>
</dbReference>
<dbReference type="InterPro" id="IPR000713">
    <property type="entry name" value="Mur_ligase_N"/>
</dbReference>
<dbReference type="InterPro" id="IPR050061">
    <property type="entry name" value="MurCDEF_pg_biosynth"/>
</dbReference>
<dbReference type="InterPro" id="IPR005758">
    <property type="entry name" value="UDP-N-AcMur_Ala_ligase_MurC"/>
</dbReference>
<dbReference type="NCBIfam" id="TIGR01082">
    <property type="entry name" value="murC"/>
    <property type="match status" value="1"/>
</dbReference>
<dbReference type="PANTHER" id="PTHR43445:SF3">
    <property type="entry name" value="UDP-N-ACETYLMURAMATE--L-ALANINE LIGASE"/>
    <property type="match status" value="1"/>
</dbReference>
<dbReference type="PANTHER" id="PTHR43445">
    <property type="entry name" value="UDP-N-ACETYLMURAMATE--L-ALANINE LIGASE-RELATED"/>
    <property type="match status" value="1"/>
</dbReference>
<dbReference type="Pfam" id="PF01225">
    <property type="entry name" value="Mur_ligase"/>
    <property type="match status" value="1"/>
</dbReference>
<dbReference type="Pfam" id="PF02875">
    <property type="entry name" value="Mur_ligase_C"/>
    <property type="match status" value="1"/>
</dbReference>
<dbReference type="Pfam" id="PF08245">
    <property type="entry name" value="Mur_ligase_M"/>
    <property type="match status" value="1"/>
</dbReference>
<dbReference type="SUPFAM" id="SSF51984">
    <property type="entry name" value="MurCD N-terminal domain"/>
    <property type="match status" value="1"/>
</dbReference>
<dbReference type="SUPFAM" id="SSF53623">
    <property type="entry name" value="MurD-like peptide ligases, catalytic domain"/>
    <property type="match status" value="1"/>
</dbReference>
<dbReference type="SUPFAM" id="SSF53244">
    <property type="entry name" value="MurD-like peptide ligases, peptide-binding domain"/>
    <property type="match status" value="1"/>
</dbReference>
<comment type="function">
    <text evidence="1">Cell wall formation.</text>
</comment>
<comment type="catalytic activity">
    <reaction evidence="1">
        <text>UDP-N-acetyl-alpha-D-muramate + L-alanine + ATP = UDP-N-acetyl-alpha-D-muramoyl-L-alanine + ADP + phosphate + H(+)</text>
        <dbReference type="Rhea" id="RHEA:23372"/>
        <dbReference type="ChEBI" id="CHEBI:15378"/>
        <dbReference type="ChEBI" id="CHEBI:30616"/>
        <dbReference type="ChEBI" id="CHEBI:43474"/>
        <dbReference type="ChEBI" id="CHEBI:57972"/>
        <dbReference type="ChEBI" id="CHEBI:70757"/>
        <dbReference type="ChEBI" id="CHEBI:83898"/>
        <dbReference type="ChEBI" id="CHEBI:456216"/>
        <dbReference type="EC" id="6.3.2.8"/>
    </reaction>
</comment>
<comment type="pathway">
    <text evidence="1">Cell wall biogenesis; peptidoglycan biosynthesis.</text>
</comment>
<comment type="subcellular location">
    <subcellularLocation>
        <location evidence="1">Cytoplasm</location>
    </subcellularLocation>
</comment>
<comment type="similarity">
    <text evidence="1">Belongs to the MurCDEF family.</text>
</comment>
<accession>Q5YYX8</accession>
<name>MURC_NOCFA</name>
<keyword id="KW-0067">ATP-binding</keyword>
<keyword id="KW-0131">Cell cycle</keyword>
<keyword id="KW-0132">Cell division</keyword>
<keyword id="KW-0133">Cell shape</keyword>
<keyword id="KW-0961">Cell wall biogenesis/degradation</keyword>
<keyword id="KW-0963">Cytoplasm</keyword>
<keyword id="KW-0436">Ligase</keyword>
<keyword id="KW-0547">Nucleotide-binding</keyword>
<keyword id="KW-0573">Peptidoglycan synthesis</keyword>
<keyword id="KW-1185">Reference proteome</keyword>
<sequence length="501" mass="52554">MNDIAAGTEQRSALPPELRRVHMVGIGGAGMSGIARILLSRGGEVSGSDAKESRGVLALRARGAQVRIGHDAGALDLLPGGPTAVVTTYAAIPKTNPELVEAQRRDIPVLLRPAVLASLMRGHRTLLVSGTHGKTSTTSMLIVALQHCGFDPSFAVGGELNEAGTNAHHGTGEIFVAEADESDGSLLQYDPDVAVVTNIESDHLDFFGSDAAYTQVFDDFADRLAAGGLLVVCLDDPGSRALAERVGPRLAERGVRVLGYGSGELADAPVPVGVRLHSWEPRDVGGVAQFQLGDEPAPRTLRLSVPGRHMALNALAALLAARAAGADLDEIIQGLEGFGGVHRRFQFVGRENGVRVFDDYAHHPTEVRAVLGAAAALVEQEARDGARSRQGRVIVVFQPHLYSRTATFATEFGAALSLADEVVVLDVYGAREKAMPGVNGALVAQAVTAPVHYQPDMSRVGRQVAGLALPGDVVITMGAGDVTMLGSQILDGLRARPQHGR</sequence>
<evidence type="ECO:0000255" key="1">
    <source>
        <dbReference type="HAMAP-Rule" id="MF_00046"/>
    </source>
</evidence>
<gene>
    <name evidence="1" type="primary">murC</name>
    <name type="ordered locus">NFA_17670</name>
</gene>
<protein>
    <recommendedName>
        <fullName evidence="1">UDP-N-acetylmuramate--L-alanine ligase</fullName>
        <ecNumber evidence="1">6.3.2.8</ecNumber>
    </recommendedName>
    <alternativeName>
        <fullName evidence="1">UDP-N-acetylmuramoyl-L-alanine synthetase</fullName>
    </alternativeName>
</protein>
<reference key="1">
    <citation type="journal article" date="2004" name="Proc. Natl. Acad. Sci. U.S.A.">
        <title>The complete genomic sequence of Nocardia farcinica IFM 10152.</title>
        <authorList>
            <person name="Ishikawa J."/>
            <person name="Yamashita A."/>
            <person name="Mikami Y."/>
            <person name="Hoshino Y."/>
            <person name="Kurita H."/>
            <person name="Hotta K."/>
            <person name="Shiba T."/>
            <person name="Hattori M."/>
        </authorList>
    </citation>
    <scope>NUCLEOTIDE SEQUENCE [LARGE SCALE GENOMIC DNA]</scope>
    <source>
        <strain>IFM 10152</strain>
    </source>
</reference>